<keyword id="KW-0175">Coiled coil</keyword>
<keyword id="KW-1185">Reference proteome</keyword>
<dbReference type="EMBL" id="L77117">
    <property type="protein sequence ID" value="AAB99423.1"/>
    <property type="molecule type" value="Genomic_DNA"/>
</dbReference>
<dbReference type="PIR" id="H64475">
    <property type="entry name" value="H64475"/>
</dbReference>
<dbReference type="FunCoup" id="Q58804">
    <property type="interactions" value="7"/>
</dbReference>
<dbReference type="PaxDb" id="243232-MJ_1409"/>
<dbReference type="EnsemblBacteria" id="AAB99423">
    <property type="protein sequence ID" value="AAB99423"/>
    <property type="gene ID" value="MJ_1409"/>
</dbReference>
<dbReference type="KEGG" id="mja:MJ_1409"/>
<dbReference type="eggNOG" id="arCOG05083">
    <property type="taxonomic scope" value="Archaea"/>
</dbReference>
<dbReference type="HOGENOM" id="CLU_1048128_0_0_2"/>
<dbReference type="InParanoid" id="Q58804"/>
<dbReference type="Proteomes" id="UP000000805">
    <property type="component" value="Chromosome"/>
</dbReference>
<proteinExistence type="predicted"/>
<sequence>METMKAKELAQKILLDIYRNLDEFSKDIIRGDLADIEFKGFYLKGKNGEKAYIRNLDDFENLKDFDVEMRKYKLKSINLKNLDEGLMIINLSSRVSKEYKFEANEYSIIYPSNNTTIEFKERVLKWMELEDDELDEKIIEFDTKMNEILEELLEDVEVEEEISVYIDVFMDVNKIENFVEKDDERIIIWIHPVFLFSNDDVLRGLLAYELSRFKSRFLEVGYKDIIKYCRELKKLTNKKPKVLEKIKDIANKYGDIDSLNLINEIENE</sequence>
<evidence type="ECO:0000255" key="1"/>
<gene>
    <name type="ordered locus">MJ1409</name>
</gene>
<accession>Q58804</accession>
<reference key="1">
    <citation type="journal article" date="1996" name="Science">
        <title>Complete genome sequence of the methanogenic archaeon, Methanococcus jannaschii.</title>
        <authorList>
            <person name="Bult C.J."/>
            <person name="White O."/>
            <person name="Olsen G.J."/>
            <person name="Zhou L."/>
            <person name="Fleischmann R.D."/>
            <person name="Sutton G.G."/>
            <person name="Blake J.A."/>
            <person name="FitzGerald L.M."/>
            <person name="Clayton R.A."/>
            <person name="Gocayne J.D."/>
            <person name="Kerlavage A.R."/>
            <person name="Dougherty B.A."/>
            <person name="Tomb J.-F."/>
            <person name="Adams M.D."/>
            <person name="Reich C.I."/>
            <person name="Overbeek R."/>
            <person name="Kirkness E.F."/>
            <person name="Weinstock K.G."/>
            <person name="Merrick J.M."/>
            <person name="Glodek A."/>
            <person name="Scott J.L."/>
            <person name="Geoghagen N.S.M."/>
            <person name="Weidman J.F."/>
            <person name="Fuhrmann J.L."/>
            <person name="Nguyen D."/>
            <person name="Utterback T.R."/>
            <person name="Kelley J.M."/>
            <person name="Peterson J.D."/>
            <person name="Sadow P.W."/>
            <person name="Hanna M.C."/>
            <person name="Cotton M.D."/>
            <person name="Roberts K.M."/>
            <person name="Hurst M.A."/>
            <person name="Kaine B.P."/>
            <person name="Borodovsky M."/>
            <person name="Klenk H.-P."/>
            <person name="Fraser C.M."/>
            <person name="Smith H.O."/>
            <person name="Woese C.R."/>
            <person name="Venter J.C."/>
        </authorList>
    </citation>
    <scope>NUCLEOTIDE SEQUENCE [LARGE SCALE GENOMIC DNA]</scope>
    <source>
        <strain>ATCC 43067 / DSM 2661 / JAL-1 / JCM 10045 / NBRC 100440</strain>
    </source>
</reference>
<feature type="chain" id="PRO_0000107314" description="Uncharacterized protein MJ1409">
    <location>
        <begin position="1"/>
        <end position="268"/>
    </location>
</feature>
<feature type="coiled-coil region" evidence="1">
    <location>
        <begin position="132"/>
        <end position="159"/>
    </location>
</feature>
<organism>
    <name type="scientific">Methanocaldococcus jannaschii (strain ATCC 43067 / DSM 2661 / JAL-1 / JCM 10045 / NBRC 100440)</name>
    <name type="common">Methanococcus jannaschii</name>
    <dbReference type="NCBI Taxonomy" id="243232"/>
    <lineage>
        <taxon>Archaea</taxon>
        <taxon>Methanobacteriati</taxon>
        <taxon>Methanobacteriota</taxon>
        <taxon>Methanomada group</taxon>
        <taxon>Methanococci</taxon>
        <taxon>Methanococcales</taxon>
        <taxon>Methanocaldococcaceae</taxon>
        <taxon>Methanocaldococcus</taxon>
    </lineage>
</organism>
<name>Y1409_METJA</name>
<protein>
    <recommendedName>
        <fullName>Uncharacterized protein MJ1409</fullName>
    </recommendedName>
</protein>